<sequence>MDFTNFDDFAFAYYGLPVRASLVSLVDHTHTFQSPTALPQHQAISGLAHSGLPFGTLPTGNRNQSMEGSKAHPDRTSPASEAPEDPTTDEFGLASRSRAGGIDPGGKPKEDKADATPAWSELKTKAGKERKRLPLACVACRRKKSRCSGEKPACEHCLRSYIPCVYKVTTRKAAPRTNCMAMLDKRPKRMEERVIEAISKSDQEVASSVTRPVVKPAIPGTVPSSQPTKKRGAEEAFGPDLEAWAKAPSEPKTEGDDGSSSLQVQEGEENKLQHEGTDALPSKEIQEHLAEVFFDNIYGQSYHLLHKPSYMRKLKNGTLPPVLVLTVCAVAARFTSSPLVSSSGPEFLRGEEWASHARDICTRRYEWPNLTILTCLLILGLHEFGTCQGGRSWALGGQAIRMAFALQLHKDLEYDPLDRNGTKTQLSFIDREIRRRIMWACFLMDRFNSSGTDRPMFVREDTIQIPLPVKEKYFQFGLPAPTEMLDGRVPHPPSPNDGQIADVRENMGVAAFLIRAITLWGRITTYLSQGCKDLDPNPLWEDESHHMKHLNDAVNLEASLPLSLKYSAENLEVHKTENTPSQFLFMHICLQHNILLVSRAAMSARKQHGVHDDFFFEASKRTFNAANRISELLREAEQSGCFVSAPFAGYCAFSSATVHSVGIISRNPSMKLAAQANLTTNVKYLHKMKKYWGMFHWMVENVRTQYQNVLDAMRAGANVEERATQLSFLQYGDWFNRYPRGLSHAEFMDPATHKRKDSGADGVLEANPELRSVEEYFTLPTPQRVENKDTISAAAPKRKQNAKKQTDMPAQSDRNLDWLQSTDADAVSQERKLSGGLGLQITGSAGFNPLTASNQQSPDFSTTMLPMSPVNMTSFAHHAHTPTFFPPQPFAMNFGQGSNGNIDPLDRQFIYGGYSMDASTSLGDGHTWAL</sequence>
<name>TF1C3_FUSO4</name>
<accession>A0A0J9VT58</accession>
<protein>
    <recommendedName>
        <fullName evidence="4">Zn(2)-C6 fungal-type transcription factor FTF1c</fullName>
    </recommendedName>
    <alternativeName>
        <fullName evidence="4">Fusarium transcription factor 1c</fullName>
    </alternativeName>
</protein>
<keyword id="KW-0479">Metal-binding</keyword>
<keyword id="KW-0539">Nucleus</keyword>
<keyword id="KW-1185">Reference proteome</keyword>
<keyword id="KW-0804">Transcription</keyword>
<keyword id="KW-0805">Transcription regulation</keyword>
<keyword id="KW-0843">Virulence</keyword>
<gene>
    <name evidence="4" type="primary">FTF1c</name>
    <name type="ORF">FOXG_12539</name>
    <name type="ORF">FOXG_12589</name>
    <name type="ORF">FOXG_14000</name>
    <name type="ORF">FOXG_17084</name>
</gene>
<evidence type="ECO:0000255" key="1">
    <source>
        <dbReference type="PROSITE-ProRule" id="PRU00227"/>
    </source>
</evidence>
<evidence type="ECO:0000269" key="2">
    <source>
    </source>
</evidence>
<evidence type="ECO:0000269" key="3">
    <source>
    </source>
</evidence>
<evidence type="ECO:0000303" key="4">
    <source>
    </source>
</evidence>
<comment type="function">
    <text evidence="2 3">Zn(2)-C6 fungal-type transcription factor that has a role in the establishment of the fungus within the plant and/or the progress of the disease (PubMed:17462924, PubMed:26817616). Regulates the expression of virulence factors such as SIX1 and SIX6 (PubMed:26817616).</text>
</comment>
<comment type="subcellular location">
    <subcellularLocation>
        <location evidence="1">Nucleus</location>
    </subcellularLocation>
</comment>
<comment type="induction">
    <text evidence="2">Exclusively expressed during infection of common bean.</text>
</comment>
<comment type="miscellaneous">
    <text evidence="2">Multiple copies of the gene are present in highly virulent fusarium oxysporum strains.</text>
</comment>
<reference key="1">
    <citation type="journal article" date="2010" name="Nature">
        <title>Comparative genomics reveals mobile pathogenicity chromosomes in Fusarium.</title>
        <authorList>
            <person name="Ma L.-J."/>
            <person name="van der Does H.C."/>
            <person name="Borkovich K.A."/>
            <person name="Coleman J.J."/>
            <person name="Daboussi M.-J."/>
            <person name="Di Pietro A."/>
            <person name="Dufresne M."/>
            <person name="Freitag M."/>
            <person name="Grabherr M."/>
            <person name="Henrissat B."/>
            <person name="Houterman P.M."/>
            <person name="Kang S."/>
            <person name="Shim W.-B."/>
            <person name="Woloshuk C."/>
            <person name="Xie X."/>
            <person name="Xu J.-R."/>
            <person name="Antoniw J."/>
            <person name="Baker S.E."/>
            <person name="Bluhm B.H."/>
            <person name="Breakspear A."/>
            <person name="Brown D.W."/>
            <person name="Butchko R.A.E."/>
            <person name="Chapman S."/>
            <person name="Coulson R."/>
            <person name="Coutinho P.M."/>
            <person name="Danchin E.G.J."/>
            <person name="Diener A."/>
            <person name="Gale L.R."/>
            <person name="Gardiner D.M."/>
            <person name="Goff S."/>
            <person name="Hammond-Kosack K.E."/>
            <person name="Hilburn K."/>
            <person name="Hua-Van A."/>
            <person name="Jonkers W."/>
            <person name="Kazan K."/>
            <person name="Kodira C.D."/>
            <person name="Koehrsen M."/>
            <person name="Kumar L."/>
            <person name="Lee Y.-H."/>
            <person name="Li L."/>
            <person name="Manners J.M."/>
            <person name="Miranda-Saavedra D."/>
            <person name="Mukherjee M."/>
            <person name="Park G."/>
            <person name="Park J."/>
            <person name="Park S.-Y."/>
            <person name="Proctor R.H."/>
            <person name="Regev A."/>
            <person name="Ruiz-Roldan M.C."/>
            <person name="Sain D."/>
            <person name="Sakthikumar S."/>
            <person name="Sykes S."/>
            <person name="Schwartz D.C."/>
            <person name="Turgeon B.G."/>
            <person name="Wapinski I."/>
            <person name="Yoder O."/>
            <person name="Young S."/>
            <person name="Zeng Q."/>
            <person name="Zhou S."/>
            <person name="Galagan J."/>
            <person name="Cuomo C.A."/>
            <person name="Kistler H.C."/>
            <person name="Rep M."/>
        </authorList>
    </citation>
    <scope>NUCLEOTIDE SEQUENCE [LARGE SCALE GENOMIC DNA]</scope>
    <source>
        <strain>4287 / CBS 123668 / FGSC 9935 / NRRL 34936</strain>
    </source>
</reference>
<reference key="2">
    <citation type="journal article" date="2007" name="Fungal Genet. Biol.">
        <title>The gene coding for a new transcription factor (ftf1) of Fusarium oxysporum is only expressed during infection of common bean.</title>
        <authorList>
            <person name="Ramos B."/>
            <person name="Alves-Santos F.M."/>
            <person name="Garcia-Sanchez M.A."/>
            <person name="Martin-Rodrigues N."/>
            <person name="Eslava A.P."/>
            <person name="Diaz-Minguez J.M."/>
        </authorList>
    </citation>
    <scope>FUNCTION</scope>
    <scope>INDUCTION</scope>
</reference>
<reference key="3">
    <citation type="journal article" date="2016" name="Mol. Plant Pathol.">
        <title>The FTF gene family regulates virulence and expression of SIX effectors in Fusarium oxysporum.</title>
        <authorList>
            <person name="Nino-Sanchez J."/>
            <person name="Casado-Del Castillo V."/>
            <person name="Tello V."/>
            <person name="De Vega-Bartol J.J."/>
            <person name="Ramos B."/>
            <person name="Sukno S.A."/>
            <person name="Diaz Minguez J.M."/>
        </authorList>
    </citation>
    <scope>FUNCTION</scope>
</reference>
<organism>
    <name type="scientific">Fusarium oxysporum f. sp. lycopersici (strain 4287 / CBS 123668 / FGSC 9935 / NRRL 34936)</name>
    <name type="common">Fusarium vascular wilt of tomato</name>
    <dbReference type="NCBI Taxonomy" id="426428"/>
    <lineage>
        <taxon>Eukaryota</taxon>
        <taxon>Fungi</taxon>
        <taxon>Dikarya</taxon>
        <taxon>Ascomycota</taxon>
        <taxon>Pezizomycotina</taxon>
        <taxon>Sordariomycetes</taxon>
        <taxon>Hypocreomycetidae</taxon>
        <taxon>Hypocreales</taxon>
        <taxon>Nectriaceae</taxon>
        <taxon>Fusarium</taxon>
        <taxon>Fusarium oxysporum species complex</taxon>
    </lineage>
</organism>
<feature type="chain" id="PRO_0000462486" description="Zn(2)-C6 fungal-type transcription factor FTF1c">
    <location>
        <begin position="1"/>
        <end position="930"/>
    </location>
</feature>
<feature type="DNA-binding region" description="Zn(2)-C6 fungal-type" evidence="1">
    <location>
        <begin position="137"/>
        <end position="164"/>
    </location>
</feature>
<proteinExistence type="evidence at transcript level"/>
<dbReference type="EMBL" id="DS231713">
    <property type="protein sequence ID" value="KNB13922.1"/>
    <property type="molecule type" value="Genomic_DNA"/>
</dbReference>
<dbReference type="EMBL" id="DS231713">
    <property type="protein sequence ID" value="KNB14028.1"/>
    <property type="molecule type" value="Genomic_DNA"/>
</dbReference>
<dbReference type="EMBL" id="DS231716">
    <property type="protein sequence ID" value="KNB15465.1"/>
    <property type="molecule type" value="Genomic_DNA"/>
</dbReference>
<dbReference type="EMBL" id="DS231736">
    <property type="protein sequence ID" value="KNB19927.1"/>
    <property type="molecule type" value="Genomic_DNA"/>
</dbReference>
<dbReference type="RefSeq" id="XP_018251967.1">
    <property type="nucleotide sequence ID" value="XM_018392352.1"/>
</dbReference>
<dbReference type="RefSeq" id="XP_018252073.1">
    <property type="nucleotide sequence ID" value="XM_018392414.1"/>
</dbReference>
<dbReference type="RefSeq" id="XP_018253510.1">
    <property type="nucleotide sequence ID" value="XM_018394071.1"/>
</dbReference>
<dbReference type="RefSeq" id="XP_018257972.1">
    <property type="nucleotide sequence ID" value="XM_018397105.1"/>
</dbReference>
<dbReference type="GeneID" id="28953865"/>
<dbReference type="GeneID" id="28953905"/>
<dbReference type="GeneID" id="28955212"/>
<dbReference type="GeneID" id="28957889"/>
<dbReference type="KEGG" id="fox:FOXG_12539"/>
<dbReference type="KEGG" id="fox:FOXG_12589"/>
<dbReference type="KEGG" id="fox:FOXG_14000"/>
<dbReference type="KEGG" id="fox:FOXG_17084"/>
<dbReference type="VEuPathDB" id="FungiDB:FOXG_12539"/>
<dbReference type="VEuPathDB" id="FungiDB:FOXG_12589"/>
<dbReference type="VEuPathDB" id="FungiDB:FOXG_14000"/>
<dbReference type="VEuPathDB" id="FungiDB:FOXG_17084"/>
<dbReference type="Proteomes" id="UP000009097">
    <property type="component" value="Unassembled WGS sequence"/>
</dbReference>
<dbReference type="GO" id="GO:0005634">
    <property type="term" value="C:nucleus"/>
    <property type="evidence" value="ECO:0007669"/>
    <property type="project" value="UniProtKB-SubCell"/>
</dbReference>
<dbReference type="GO" id="GO:0003677">
    <property type="term" value="F:DNA binding"/>
    <property type="evidence" value="ECO:0007669"/>
    <property type="project" value="InterPro"/>
</dbReference>
<dbReference type="GO" id="GO:0000981">
    <property type="term" value="F:DNA-binding transcription factor activity, RNA polymerase II-specific"/>
    <property type="evidence" value="ECO:0007669"/>
    <property type="project" value="InterPro"/>
</dbReference>
<dbReference type="GO" id="GO:0008270">
    <property type="term" value="F:zinc ion binding"/>
    <property type="evidence" value="ECO:0007669"/>
    <property type="project" value="InterPro"/>
</dbReference>
<dbReference type="GO" id="GO:0006351">
    <property type="term" value="P:DNA-templated transcription"/>
    <property type="evidence" value="ECO:0007669"/>
    <property type="project" value="InterPro"/>
</dbReference>
<dbReference type="CDD" id="cd12148">
    <property type="entry name" value="fungal_TF_MHR"/>
    <property type="match status" value="1"/>
</dbReference>
<dbReference type="CDD" id="cd00067">
    <property type="entry name" value="GAL4"/>
    <property type="match status" value="1"/>
</dbReference>
<dbReference type="Gene3D" id="4.10.240.10">
    <property type="entry name" value="Zn(2)-C6 fungal-type DNA-binding domain"/>
    <property type="match status" value="1"/>
</dbReference>
<dbReference type="InterPro" id="IPR050815">
    <property type="entry name" value="TF_fung"/>
</dbReference>
<dbReference type="InterPro" id="IPR007219">
    <property type="entry name" value="Transcription_factor_dom_fun"/>
</dbReference>
<dbReference type="InterPro" id="IPR036864">
    <property type="entry name" value="Zn2-C6_fun-type_DNA-bd_sf"/>
</dbReference>
<dbReference type="InterPro" id="IPR001138">
    <property type="entry name" value="Zn2Cys6_DnaBD"/>
</dbReference>
<dbReference type="PANTHER" id="PTHR47338:SF27">
    <property type="entry name" value="ZN(II)2CYS6 TRANSCRIPTION FACTOR (EUROFUNG)"/>
    <property type="match status" value="1"/>
</dbReference>
<dbReference type="PANTHER" id="PTHR47338">
    <property type="entry name" value="ZN(II)2CYS6 TRANSCRIPTION FACTOR (EUROFUNG)-RELATED"/>
    <property type="match status" value="1"/>
</dbReference>
<dbReference type="Pfam" id="PF04082">
    <property type="entry name" value="Fungal_trans"/>
    <property type="match status" value="1"/>
</dbReference>
<dbReference type="Pfam" id="PF00172">
    <property type="entry name" value="Zn_clus"/>
    <property type="match status" value="1"/>
</dbReference>
<dbReference type="PRINTS" id="PR00755">
    <property type="entry name" value="AFLATOXINBRP"/>
</dbReference>
<dbReference type="SMART" id="SM00906">
    <property type="entry name" value="Fungal_trans"/>
    <property type="match status" value="1"/>
</dbReference>
<dbReference type="SMART" id="SM00066">
    <property type="entry name" value="GAL4"/>
    <property type="match status" value="1"/>
</dbReference>
<dbReference type="SUPFAM" id="SSF57701">
    <property type="entry name" value="Zn2/Cys6 DNA-binding domain"/>
    <property type="match status" value="1"/>
</dbReference>
<dbReference type="PROSITE" id="PS00463">
    <property type="entry name" value="ZN2_CY6_FUNGAL_1"/>
    <property type="match status" value="1"/>
</dbReference>
<dbReference type="PROSITE" id="PS50048">
    <property type="entry name" value="ZN2_CY6_FUNGAL_2"/>
    <property type="match status" value="1"/>
</dbReference>